<proteinExistence type="inferred from homology"/>
<name>RL34_BRUC2</name>
<keyword id="KW-1185">Reference proteome</keyword>
<keyword id="KW-0687">Ribonucleoprotein</keyword>
<keyword id="KW-0689">Ribosomal protein</keyword>
<gene>
    <name evidence="1" type="primary">rpmH</name>
    <name type="ordered locus">BCAN_B1042</name>
</gene>
<feature type="chain" id="PRO_1000080240" description="Large ribosomal subunit protein bL34">
    <location>
        <begin position="1"/>
        <end position="44"/>
    </location>
</feature>
<accession>A9MCU7</accession>
<protein>
    <recommendedName>
        <fullName evidence="1">Large ribosomal subunit protein bL34</fullName>
    </recommendedName>
    <alternativeName>
        <fullName evidence="2">50S ribosomal protein L34</fullName>
    </alternativeName>
</protein>
<comment type="similarity">
    <text evidence="1">Belongs to the bacterial ribosomal protein bL34 family.</text>
</comment>
<organism>
    <name type="scientific">Brucella canis (strain ATCC 23365 / NCTC 10854 / RM-666)</name>
    <dbReference type="NCBI Taxonomy" id="483179"/>
    <lineage>
        <taxon>Bacteria</taxon>
        <taxon>Pseudomonadati</taxon>
        <taxon>Pseudomonadota</taxon>
        <taxon>Alphaproteobacteria</taxon>
        <taxon>Hyphomicrobiales</taxon>
        <taxon>Brucellaceae</taxon>
        <taxon>Brucella/Ochrobactrum group</taxon>
        <taxon>Brucella</taxon>
    </lineage>
</organism>
<reference key="1">
    <citation type="submission" date="2007-10" db="EMBL/GenBank/DDBJ databases">
        <title>Brucella canis ATCC 23365 whole genome shotgun sequencing project.</title>
        <authorList>
            <person name="Setubal J.C."/>
            <person name="Bowns C."/>
            <person name="Boyle S."/>
            <person name="Crasta O.R."/>
            <person name="Czar M.J."/>
            <person name="Dharmanolla C."/>
            <person name="Gillespie J.J."/>
            <person name="Kenyon R.W."/>
            <person name="Lu J."/>
            <person name="Mane S."/>
            <person name="Mohapatra S."/>
            <person name="Nagrani S."/>
            <person name="Purkayastha A."/>
            <person name="Rajasimha H.K."/>
            <person name="Shallom J.M."/>
            <person name="Shallom S."/>
            <person name="Shukla M."/>
            <person name="Snyder E.E."/>
            <person name="Sobral B.W."/>
            <person name="Wattam A.R."/>
            <person name="Will R."/>
            <person name="Williams K."/>
            <person name="Yoo H."/>
            <person name="Bruce D."/>
            <person name="Detter C."/>
            <person name="Munk C."/>
            <person name="Brettin T.S."/>
        </authorList>
    </citation>
    <scope>NUCLEOTIDE SEQUENCE [LARGE SCALE GENOMIC DNA]</scope>
    <source>
        <strain>ATCC 23365 / NCTC 10854 / RM-666</strain>
    </source>
</reference>
<sequence length="44" mass="5168">MKRTYQPSKIVRKRRHGFRARMATTGGRKVLAARRTRGRKRLSA</sequence>
<dbReference type="EMBL" id="CP000873">
    <property type="protein sequence ID" value="ABX64184.1"/>
    <property type="molecule type" value="Genomic_DNA"/>
</dbReference>
<dbReference type="RefSeq" id="WP_002965629.1">
    <property type="nucleotide sequence ID" value="NC_010104.1"/>
</dbReference>
<dbReference type="SMR" id="A9MCU7"/>
<dbReference type="GeneID" id="97534928"/>
<dbReference type="KEGG" id="bcs:BCAN_B1042"/>
<dbReference type="HOGENOM" id="CLU_129938_2_0_5"/>
<dbReference type="Proteomes" id="UP000001385">
    <property type="component" value="Chromosome II"/>
</dbReference>
<dbReference type="GO" id="GO:1990904">
    <property type="term" value="C:ribonucleoprotein complex"/>
    <property type="evidence" value="ECO:0007669"/>
    <property type="project" value="UniProtKB-KW"/>
</dbReference>
<dbReference type="GO" id="GO:0005840">
    <property type="term" value="C:ribosome"/>
    <property type="evidence" value="ECO:0007669"/>
    <property type="project" value="UniProtKB-KW"/>
</dbReference>
<dbReference type="GO" id="GO:0003735">
    <property type="term" value="F:structural constituent of ribosome"/>
    <property type="evidence" value="ECO:0007669"/>
    <property type="project" value="InterPro"/>
</dbReference>
<dbReference type="GO" id="GO:0006412">
    <property type="term" value="P:translation"/>
    <property type="evidence" value="ECO:0007669"/>
    <property type="project" value="UniProtKB-UniRule"/>
</dbReference>
<dbReference type="FunFam" id="1.10.287.3980:FF:000001">
    <property type="entry name" value="Mitochondrial ribosomal protein L34"/>
    <property type="match status" value="1"/>
</dbReference>
<dbReference type="Gene3D" id="1.10.287.3980">
    <property type="match status" value="1"/>
</dbReference>
<dbReference type="HAMAP" id="MF_00391">
    <property type="entry name" value="Ribosomal_bL34"/>
    <property type="match status" value="1"/>
</dbReference>
<dbReference type="InterPro" id="IPR000271">
    <property type="entry name" value="Ribosomal_bL34"/>
</dbReference>
<dbReference type="InterPro" id="IPR020939">
    <property type="entry name" value="Ribosomal_bL34_CS"/>
</dbReference>
<dbReference type="NCBIfam" id="TIGR01030">
    <property type="entry name" value="rpmH_bact"/>
    <property type="match status" value="1"/>
</dbReference>
<dbReference type="PANTHER" id="PTHR14503:SF4">
    <property type="entry name" value="LARGE RIBOSOMAL SUBUNIT PROTEIN BL34M"/>
    <property type="match status" value="1"/>
</dbReference>
<dbReference type="PANTHER" id="PTHR14503">
    <property type="entry name" value="MITOCHONDRIAL RIBOSOMAL PROTEIN 34 FAMILY MEMBER"/>
    <property type="match status" value="1"/>
</dbReference>
<dbReference type="Pfam" id="PF00468">
    <property type="entry name" value="Ribosomal_L34"/>
    <property type="match status" value="1"/>
</dbReference>
<dbReference type="PROSITE" id="PS00784">
    <property type="entry name" value="RIBOSOMAL_L34"/>
    <property type="match status" value="1"/>
</dbReference>
<evidence type="ECO:0000255" key="1">
    <source>
        <dbReference type="HAMAP-Rule" id="MF_00391"/>
    </source>
</evidence>
<evidence type="ECO:0000305" key="2"/>